<organism>
    <name type="scientific">Lacticaseibacillus casei (strain BL23)</name>
    <name type="common">Lactobacillus casei</name>
    <dbReference type="NCBI Taxonomy" id="543734"/>
    <lineage>
        <taxon>Bacteria</taxon>
        <taxon>Bacillati</taxon>
        <taxon>Bacillota</taxon>
        <taxon>Bacilli</taxon>
        <taxon>Lactobacillales</taxon>
        <taxon>Lactobacillaceae</taxon>
        <taxon>Lacticaseibacillus</taxon>
    </lineage>
</organism>
<name>OBG_LACCB</name>
<proteinExistence type="inferred from homology"/>
<accession>B3WE52</accession>
<sequence length="428" mass="46268">MFVDQVQVEVQAGKGGDGMVAFRREKFVPFGGPAGGDGGHGGSIILYVDEGLRTLMDFRYQRHFKASAGGNGQGKQMYGRAAEDRRIAVPAGTTVTDADTGEVLGDLTEPGQTLVVAKGGRGGRGNMHFVSPKNTAPEISENGEPGEHRFIKLELKVLADVGLVGFPSVGKSTLLSVVTQAKPKIAAYQFTTLVPNLGMVQLDDGTDFVMADLPGLIEGASQGVGLGIQFLRHVERTRVLLHLVEMDPDNGREPLDDYDQIRKELGAYDDNILKRPELVVATKMDLPGAAERFADFKAALLARGVAADHIFEISSLTHRGVTPLMHKTAEVLKTAPHFEPEQAAVKTADYKYQPEPALKVTRDSDGTFVLTGDKIERAFKMANLDHEDGAMRFARQLRSMGVDDALRDAGAESGDLVAIDDFTFEFVE</sequence>
<reference key="1">
    <citation type="submission" date="2008-06" db="EMBL/GenBank/DDBJ databases">
        <title>Lactobacillus casei BL23 complete genome sequence.</title>
        <authorList>
            <person name="Maze A."/>
            <person name="Boel G."/>
            <person name="Bourand A."/>
            <person name="Loux V."/>
            <person name="Gibrat J.F."/>
            <person name="Zuniga M."/>
            <person name="Hartke A."/>
            <person name="Deutscher J."/>
        </authorList>
    </citation>
    <scope>NUCLEOTIDE SEQUENCE [LARGE SCALE GENOMIC DNA]</scope>
    <source>
        <strain>BL23</strain>
    </source>
</reference>
<comment type="function">
    <text evidence="1">An essential GTPase which binds GTP, GDP and possibly (p)ppGpp with moderate affinity, with high nucleotide exchange rates and a fairly low GTP hydrolysis rate. Plays a role in control of the cell cycle, stress response, ribosome biogenesis and in those bacteria that undergo differentiation, in morphogenesis control.</text>
</comment>
<comment type="cofactor">
    <cofactor evidence="1">
        <name>Mg(2+)</name>
        <dbReference type="ChEBI" id="CHEBI:18420"/>
    </cofactor>
</comment>
<comment type="subunit">
    <text evidence="1">Monomer.</text>
</comment>
<comment type="subcellular location">
    <subcellularLocation>
        <location evidence="1">Cytoplasm</location>
    </subcellularLocation>
</comment>
<comment type="similarity">
    <text evidence="1">Belongs to the TRAFAC class OBG-HflX-like GTPase superfamily. OBG GTPase family.</text>
</comment>
<protein>
    <recommendedName>
        <fullName evidence="1">GTPase Obg</fullName>
        <ecNumber evidence="1">3.6.5.-</ecNumber>
    </recommendedName>
    <alternativeName>
        <fullName evidence="1">GTP-binding protein Obg</fullName>
    </alternativeName>
</protein>
<evidence type="ECO:0000255" key="1">
    <source>
        <dbReference type="HAMAP-Rule" id="MF_01454"/>
    </source>
</evidence>
<evidence type="ECO:0000255" key="2">
    <source>
        <dbReference type="PROSITE-ProRule" id="PRU01229"/>
    </source>
</evidence>
<evidence type="ECO:0000255" key="3">
    <source>
        <dbReference type="PROSITE-ProRule" id="PRU01231"/>
    </source>
</evidence>
<keyword id="KW-0963">Cytoplasm</keyword>
<keyword id="KW-0342">GTP-binding</keyword>
<keyword id="KW-0378">Hydrolase</keyword>
<keyword id="KW-0460">Magnesium</keyword>
<keyword id="KW-0479">Metal-binding</keyword>
<keyword id="KW-0547">Nucleotide-binding</keyword>
<gene>
    <name evidence="1" type="primary">obg</name>
    <name type="ordered locus">LCABL_15720</name>
</gene>
<dbReference type="EC" id="3.6.5.-" evidence="1"/>
<dbReference type="EMBL" id="FM177140">
    <property type="protein sequence ID" value="CAQ66653.1"/>
    <property type="molecule type" value="Genomic_DNA"/>
</dbReference>
<dbReference type="SMR" id="B3WE52"/>
<dbReference type="KEGG" id="lcb:LCABL_15720"/>
<dbReference type="HOGENOM" id="CLU_011747_2_1_9"/>
<dbReference type="GO" id="GO:0005737">
    <property type="term" value="C:cytoplasm"/>
    <property type="evidence" value="ECO:0007669"/>
    <property type="project" value="UniProtKB-SubCell"/>
</dbReference>
<dbReference type="GO" id="GO:0005525">
    <property type="term" value="F:GTP binding"/>
    <property type="evidence" value="ECO:0007669"/>
    <property type="project" value="UniProtKB-UniRule"/>
</dbReference>
<dbReference type="GO" id="GO:0003924">
    <property type="term" value="F:GTPase activity"/>
    <property type="evidence" value="ECO:0007669"/>
    <property type="project" value="UniProtKB-UniRule"/>
</dbReference>
<dbReference type="GO" id="GO:0000287">
    <property type="term" value="F:magnesium ion binding"/>
    <property type="evidence" value="ECO:0007669"/>
    <property type="project" value="InterPro"/>
</dbReference>
<dbReference type="GO" id="GO:0042254">
    <property type="term" value="P:ribosome biogenesis"/>
    <property type="evidence" value="ECO:0007669"/>
    <property type="project" value="UniProtKB-UniRule"/>
</dbReference>
<dbReference type="CDD" id="cd01898">
    <property type="entry name" value="Obg"/>
    <property type="match status" value="1"/>
</dbReference>
<dbReference type="FunFam" id="2.70.210.12:FF:000001">
    <property type="entry name" value="GTPase Obg"/>
    <property type="match status" value="1"/>
</dbReference>
<dbReference type="Gene3D" id="3.30.300.350">
    <property type="entry name" value="GTP-binding protein OBG, C-terminal domain"/>
    <property type="match status" value="1"/>
</dbReference>
<dbReference type="Gene3D" id="2.70.210.12">
    <property type="entry name" value="GTP1/OBG domain"/>
    <property type="match status" value="1"/>
</dbReference>
<dbReference type="Gene3D" id="3.40.50.300">
    <property type="entry name" value="P-loop containing nucleotide triphosphate hydrolases"/>
    <property type="match status" value="1"/>
</dbReference>
<dbReference type="HAMAP" id="MF_01454">
    <property type="entry name" value="GTPase_Obg"/>
    <property type="match status" value="1"/>
</dbReference>
<dbReference type="InterPro" id="IPR031167">
    <property type="entry name" value="G_OBG"/>
</dbReference>
<dbReference type="InterPro" id="IPR006073">
    <property type="entry name" value="GTP-bd"/>
</dbReference>
<dbReference type="InterPro" id="IPR014100">
    <property type="entry name" value="GTP-bd_Obg/CgtA"/>
</dbReference>
<dbReference type="InterPro" id="IPR036346">
    <property type="entry name" value="GTP-bd_prot_GTP1/OBG_C_sf"/>
</dbReference>
<dbReference type="InterPro" id="IPR006074">
    <property type="entry name" value="GTP1-OBG_CS"/>
</dbReference>
<dbReference type="InterPro" id="IPR006169">
    <property type="entry name" value="GTP1_OBG_dom"/>
</dbReference>
<dbReference type="InterPro" id="IPR036726">
    <property type="entry name" value="GTP1_OBG_dom_sf"/>
</dbReference>
<dbReference type="InterPro" id="IPR045086">
    <property type="entry name" value="OBG_GTPase"/>
</dbReference>
<dbReference type="InterPro" id="IPR015349">
    <property type="entry name" value="OCT_dom"/>
</dbReference>
<dbReference type="InterPro" id="IPR027417">
    <property type="entry name" value="P-loop_NTPase"/>
</dbReference>
<dbReference type="NCBIfam" id="TIGR02729">
    <property type="entry name" value="Obg_CgtA"/>
    <property type="match status" value="1"/>
</dbReference>
<dbReference type="NCBIfam" id="TIGR03595">
    <property type="entry name" value="Obg_CgtA_exten"/>
    <property type="match status" value="1"/>
</dbReference>
<dbReference type="NCBIfam" id="NF008954">
    <property type="entry name" value="PRK12296.1"/>
    <property type="match status" value="1"/>
</dbReference>
<dbReference type="NCBIfam" id="NF008955">
    <property type="entry name" value="PRK12297.1"/>
    <property type="match status" value="1"/>
</dbReference>
<dbReference type="NCBIfam" id="NF008956">
    <property type="entry name" value="PRK12299.1"/>
    <property type="match status" value="1"/>
</dbReference>
<dbReference type="PANTHER" id="PTHR11702">
    <property type="entry name" value="DEVELOPMENTALLY REGULATED GTP-BINDING PROTEIN-RELATED"/>
    <property type="match status" value="1"/>
</dbReference>
<dbReference type="PANTHER" id="PTHR11702:SF31">
    <property type="entry name" value="MITOCHONDRIAL RIBOSOME-ASSOCIATED GTPASE 2"/>
    <property type="match status" value="1"/>
</dbReference>
<dbReference type="Pfam" id="PF09269">
    <property type="entry name" value="DUF1967"/>
    <property type="match status" value="1"/>
</dbReference>
<dbReference type="Pfam" id="PF01018">
    <property type="entry name" value="GTP1_OBG"/>
    <property type="match status" value="1"/>
</dbReference>
<dbReference type="Pfam" id="PF01926">
    <property type="entry name" value="MMR_HSR1"/>
    <property type="match status" value="1"/>
</dbReference>
<dbReference type="PIRSF" id="PIRSF002401">
    <property type="entry name" value="GTP_bd_Obg/CgtA"/>
    <property type="match status" value="1"/>
</dbReference>
<dbReference type="PRINTS" id="PR00326">
    <property type="entry name" value="GTP1OBG"/>
</dbReference>
<dbReference type="SUPFAM" id="SSF102741">
    <property type="entry name" value="Obg GTP-binding protein C-terminal domain"/>
    <property type="match status" value="1"/>
</dbReference>
<dbReference type="SUPFAM" id="SSF82051">
    <property type="entry name" value="Obg GTP-binding protein N-terminal domain"/>
    <property type="match status" value="1"/>
</dbReference>
<dbReference type="SUPFAM" id="SSF52540">
    <property type="entry name" value="P-loop containing nucleoside triphosphate hydrolases"/>
    <property type="match status" value="1"/>
</dbReference>
<dbReference type="PROSITE" id="PS51710">
    <property type="entry name" value="G_OBG"/>
    <property type="match status" value="1"/>
</dbReference>
<dbReference type="PROSITE" id="PS00905">
    <property type="entry name" value="GTP1_OBG"/>
    <property type="match status" value="1"/>
</dbReference>
<dbReference type="PROSITE" id="PS51883">
    <property type="entry name" value="OBG"/>
    <property type="match status" value="1"/>
</dbReference>
<dbReference type="PROSITE" id="PS51881">
    <property type="entry name" value="OCT"/>
    <property type="match status" value="1"/>
</dbReference>
<feature type="chain" id="PRO_0000385992" description="GTPase Obg">
    <location>
        <begin position="1"/>
        <end position="428"/>
    </location>
</feature>
<feature type="domain" description="Obg" evidence="3">
    <location>
        <begin position="1"/>
        <end position="158"/>
    </location>
</feature>
<feature type="domain" description="OBG-type G" evidence="1">
    <location>
        <begin position="159"/>
        <end position="333"/>
    </location>
</feature>
<feature type="domain" description="OCT" evidence="2">
    <location>
        <begin position="350"/>
        <end position="428"/>
    </location>
</feature>
<feature type="binding site" evidence="1">
    <location>
        <begin position="165"/>
        <end position="172"/>
    </location>
    <ligand>
        <name>GTP</name>
        <dbReference type="ChEBI" id="CHEBI:37565"/>
    </ligand>
</feature>
<feature type="binding site" evidence="1">
    <location>
        <position position="172"/>
    </location>
    <ligand>
        <name>Mg(2+)</name>
        <dbReference type="ChEBI" id="CHEBI:18420"/>
    </ligand>
</feature>
<feature type="binding site" evidence="1">
    <location>
        <begin position="190"/>
        <end position="194"/>
    </location>
    <ligand>
        <name>GTP</name>
        <dbReference type="ChEBI" id="CHEBI:37565"/>
    </ligand>
</feature>
<feature type="binding site" evidence="1">
    <location>
        <position position="192"/>
    </location>
    <ligand>
        <name>Mg(2+)</name>
        <dbReference type="ChEBI" id="CHEBI:18420"/>
    </ligand>
</feature>
<feature type="binding site" evidence="1">
    <location>
        <begin position="212"/>
        <end position="215"/>
    </location>
    <ligand>
        <name>GTP</name>
        <dbReference type="ChEBI" id="CHEBI:37565"/>
    </ligand>
</feature>
<feature type="binding site" evidence="1">
    <location>
        <begin position="282"/>
        <end position="285"/>
    </location>
    <ligand>
        <name>GTP</name>
        <dbReference type="ChEBI" id="CHEBI:37565"/>
    </ligand>
</feature>
<feature type="binding site" evidence="1">
    <location>
        <begin position="314"/>
        <end position="316"/>
    </location>
    <ligand>
        <name>GTP</name>
        <dbReference type="ChEBI" id="CHEBI:37565"/>
    </ligand>
</feature>